<feature type="chain" id="PRO_0000387630" description="Acetaldehyde dehydrogenase 1">
    <location>
        <begin position="1"/>
        <end position="299"/>
    </location>
</feature>
<feature type="active site" description="Acyl-thioester intermediate" evidence="1">
    <location>
        <position position="130"/>
    </location>
</feature>
<feature type="binding site" evidence="1">
    <location>
        <begin position="161"/>
        <end position="169"/>
    </location>
    <ligand>
        <name>NAD(+)</name>
        <dbReference type="ChEBI" id="CHEBI:57540"/>
    </ligand>
</feature>
<feature type="binding site" evidence="1">
    <location>
        <position position="272"/>
    </location>
    <ligand>
        <name>NAD(+)</name>
        <dbReference type="ChEBI" id="CHEBI:57540"/>
    </ligand>
</feature>
<evidence type="ECO:0000255" key="1">
    <source>
        <dbReference type="HAMAP-Rule" id="MF_01657"/>
    </source>
</evidence>
<gene>
    <name type="primary">mhpF</name>
    <name type="ordered locus">BceJ2315_50630</name>
    <name type="ORF">BCAM1614</name>
</gene>
<accession>B4EK77</accession>
<sequence length="299" mass="31661">MKKIKCALIGPGNIGTDLLYKLRRSPVLEPVWMVGVDPASDGLARAREFGLKTTDKGVDGLLPHVVGDEIRIAFDATSAYVHRDNSDKLTALGVKMIDLTPAAIGPYCVPPVNLDAHLDSAQTNVNMVTCGGQATIPMVYAVSRVQPVAYGEIVATVSSRSVGPGTRKNIDEFTRTTSGAIEQVGGARKGKAIIVINPAEPPLIMRDTIHCLTDGPPDVDAITASVHAMVKEVQRYVPGYTLKNGPVFDGNRVSVFMEVEGLGDYLPKYAGNLDIMTAAAAATAERFAEQMLAATAATA</sequence>
<protein>
    <recommendedName>
        <fullName evidence="1">Acetaldehyde dehydrogenase 1</fullName>
        <ecNumber evidence="1">1.2.1.10</ecNumber>
    </recommendedName>
    <alternativeName>
        <fullName evidence="1">Acetaldehyde dehydrogenase [acetylating] 1</fullName>
    </alternativeName>
</protein>
<keyword id="KW-0058">Aromatic hydrocarbons catabolism</keyword>
<keyword id="KW-0520">NAD</keyword>
<keyword id="KW-0560">Oxidoreductase</keyword>
<proteinExistence type="inferred from homology"/>
<comment type="catalytic activity">
    <reaction evidence="1">
        <text>acetaldehyde + NAD(+) + CoA = acetyl-CoA + NADH + H(+)</text>
        <dbReference type="Rhea" id="RHEA:23288"/>
        <dbReference type="ChEBI" id="CHEBI:15343"/>
        <dbReference type="ChEBI" id="CHEBI:15378"/>
        <dbReference type="ChEBI" id="CHEBI:57287"/>
        <dbReference type="ChEBI" id="CHEBI:57288"/>
        <dbReference type="ChEBI" id="CHEBI:57540"/>
        <dbReference type="ChEBI" id="CHEBI:57945"/>
        <dbReference type="EC" id="1.2.1.10"/>
    </reaction>
</comment>
<comment type="similarity">
    <text evidence="1">Belongs to the acetaldehyde dehydrogenase family.</text>
</comment>
<name>ACDH1_BURCJ</name>
<reference key="1">
    <citation type="journal article" date="2009" name="J. Bacteriol.">
        <title>The genome of Burkholderia cenocepacia J2315, an epidemic pathogen of cystic fibrosis patients.</title>
        <authorList>
            <person name="Holden M.T."/>
            <person name="Seth-Smith H.M."/>
            <person name="Crossman L.C."/>
            <person name="Sebaihia M."/>
            <person name="Bentley S.D."/>
            <person name="Cerdeno-Tarraga A.M."/>
            <person name="Thomson N.R."/>
            <person name="Bason N."/>
            <person name="Quail M.A."/>
            <person name="Sharp S."/>
            <person name="Cherevach I."/>
            <person name="Churcher C."/>
            <person name="Goodhead I."/>
            <person name="Hauser H."/>
            <person name="Holroyd N."/>
            <person name="Mungall K."/>
            <person name="Scott P."/>
            <person name="Walker D."/>
            <person name="White B."/>
            <person name="Rose H."/>
            <person name="Iversen P."/>
            <person name="Mil-Homens D."/>
            <person name="Rocha E.P."/>
            <person name="Fialho A.M."/>
            <person name="Baldwin A."/>
            <person name="Dowson C."/>
            <person name="Barrell B.G."/>
            <person name="Govan J.R."/>
            <person name="Vandamme P."/>
            <person name="Hart C.A."/>
            <person name="Mahenthiralingam E."/>
            <person name="Parkhill J."/>
        </authorList>
    </citation>
    <scope>NUCLEOTIDE SEQUENCE [LARGE SCALE GENOMIC DNA]</scope>
    <source>
        <strain>ATCC BAA-245 / DSM 16553 / LMG 16656 / NCTC 13227 / J2315 / CF5610</strain>
    </source>
</reference>
<organism>
    <name type="scientific">Burkholderia cenocepacia (strain ATCC BAA-245 / DSM 16553 / LMG 16656 / NCTC 13227 / J2315 / CF5610)</name>
    <name type="common">Burkholderia cepacia (strain J2315)</name>
    <dbReference type="NCBI Taxonomy" id="216591"/>
    <lineage>
        <taxon>Bacteria</taxon>
        <taxon>Pseudomonadati</taxon>
        <taxon>Pseudomonadota</taxon>
        <taxon>Betaproteobacteria</taxon>
        <taxon>Burkholderiales</taxon>
        <taxon>Burkholderiaceae</taxon>
        <taxon>Burkholderia</taxon>
        <taxon>Burkholderia cepacia complex</taxon>
    </lineage>
</organism>
<dbReference type="EC" id="1.2.1.10" evidence="1"/>
<dbReference type="EMBL" id="AM747721">
    <property type="protein sequence ID" value="CAR55470.1"/>
    <property type="molecule type" value="Genomic_DNA"/>
</dbReference>
<dbReference type="RefSeq" id="WP_006483009.1">
    <property type="nucleotide sequence ID" value="NC_011001.1"/>
</dbReference>
<dbReference type="SMR" id="B4EK77"/>
<dbReference type="KEGG" id="bcj:BCAM1614"/>
<dbReference type="eggNOG" id="COG4569">
    <property type="taxonomic scope" value="Bacteria"/>
</dbReference>
<dbReference type="HOGENOM" id="CLU_062208_0_0_4"/>
<dbReference type="BioCyc" id="BCEN216591:G1G1V-5640-MONOMER"/>
<dbReference type="Proteomes" id="UP000001035">
    <property type="component" value="Chromosome 2"/>
</dbReference>
<dbReference type="GO" id="GO:0008774">
    <property type="term" value="F:acetaldehyde dehydrogenase (acetylating) activity"/>
    <property type="evidence" value="ECO:0007669"/>
    <property type="project" value="UniProtKB-UniRule"/>
</dbReference>
<dbReference type="GO" id="GO:0051287">
    <property type="term" value="F:NAD binding"/>
    <property type="evidence" value="ECO:0007669"/>
    <property type="project" value="UniProtKB-UniRule"/>
</dbReference>
<dbReference type="GO" id="GO:0009056">
    <property type="term" value="P:catabolic process"/>
    <property type="evidence" value="ECO:0007669"/>
    <property type="project" value="UniProtKB-KW"/>
</dbReference>
<dbReference type="CDD" id="cd23933">
    <property type="entry name" value="ALDH_C"/>
    <property type="match status" value="1"/>
</dbReference>
<dbReference type="Gene3D" id="3.30.360.10">
    <property type="entry name" value="Dihydrodipicolinate Reductase, domain 2"/>
    <property type="match status" value="1"/>
</dbReference>
<dbReference type="Gene3D" id="3.40.50.720">
    <property type="entry name" value="NAD(P)-binding Rossmann-like Domain"/>
    <property type="match status" value="1"/>
</dbReference>
<dbReference type="HAMAP" id="MF_01657">
    <property type="entry name" value="Ac_ald_DH_ac"/>
    <property type="match status" value="1"/>
</dbReference>
<dbReference type="InterPro" id="IPR003361">
    <property type="entry name" value="Acetaldehyde_dehydrogenase"/>
</dbReference>
<dbReference type="InterPro" id="IPR015426">
    <property type="entry name" value="Acetylaldehyde_DH_C"/>
</dbReference>
<dbReference type="InterPro" id="IPR036291">
    <property type="entry name" value="NAD(P)-bd_dom_sf"/>
</dbReference>
<dbReference type="InterPro" id="IPR000534">
    <property type="entry name" value="Semialdehyde_DH_NAD-bd"/>
</dbReference>
<dbReference type="NCBIfam" id="TIGR03215">
    <property type="entry name" value="ac_ald_DH_ac"/>
    <property type="match status" value="1"/>
</dbReference>
<dbReference type="NCBIfam" id="NF006157">
    <property type="entry name" value="PRK08300.1"/>
    <property type="match status" value="1"/>
</dbReference>
<dbReference type="Pfam" id="PF09290">
    <property type="entry name" value="AcetDehyd-dimer"/>
    <property type="match status" value="1"/>
</dbReference>
<dbReference type="PIRSF" id="PIRSF015689">
    <property type="entry name" value="Actaldh_dh_actl"/>
    <property type="match status" value="1"/>
</dbReference>
<dbReference type="SMART" id="SM00859">
    <property type="entry name" value="Semialdhyde_dh"/>
    <property type="match status" value="1"/>
</dbReference>
<dbReference type="SUPFAM" id="SSF55347">
    <property type="entry name" value="Glyceraldehyde-3-phosphate dehydrogenase-like, C-terminal domain"/>
    <property type="match status" value="1"/>
</dbReference>
<dbReference type="SUPFAM" id="SSF51735">
    <property type="entry name" value="NAD(P)-binding Rossmann-fold domains"/>
    <property type="match status" value="1"/>
</dbReference>